<accession>B7N5U3</accession>
<sequence>MKKKTTLSEEDQALFRQLMAGTRKIKQDTIVHRPQRKKISEVPVKRLIQEQADASHYFSDEFQPLLNTEGPVKYVRPDVSHFEAKKLRRGDYSPELFLDLHGLTQLQAKQELGALIAACRREHVFCACVMHGHGKHILKQQTPLWLAQHPHVMAFHQAPKEYGGDAALLVLIEVDEWLPPELP</sequence>
<organism>
    <name type="scientific">Escherichia coli O17:K52:H18 (strain UMN026 / ExPEC)</name>
    <dbReference type="NCBI Taxonomy" id="585056"/>
    <lineage>
        <taxon>Bacteria</taxon>
        <taxon>Pseudomonadati</taxon>
        <taxon>Pseudomonadota</taxon>
        <taxon>Gammaproteobacteria</taxon>
        <taxon>Enterobacterales</taxon>
        <taxon>Enterobacteriaceae</taxon>
        <taxon>Escherichia</taxon>
    </lineage>
</organism>
<evidence type="ECO:0000255" key="1">
    <source>
        <dbReference type="HAMAP-Rule" id="MF_01042"/>
    </source>
</evidence>
<feature type="chain" id="PRO_1000136040" description="Ribosome rescue factor SmrB">
    <location>
        <begin position="1"/>
        <end position="183"/>
    </location>
</feature>
<feature type="domain" description="Smr" evidence="1">
    <location>
        <begin position="98"/>
        <end position="173"/>
    </location>
</feature>
<protein>
    <recommendedName>
        <fullName evidence="1">Ribosome rescue factor SmrB</fullName>
        <ecNumber evidence="1">3.1.-.-</ecNumber>
    </recommendedName>
</protein>
<name>SMRB_ECOLU</name>
<comment type="function">
    <text evidence="1">Acts as a ribosome collision sensor. Detects stalled/collided disomes (pairs of ribosomes where the leading ribosome is stalled and a second ribosome has collided with it) and endonucleolytically cleaves mRNA at the 5' boundary of the stalled ribosome. Stalled/collided disomes form a new interface (primarily via the 30S subunits) that binds SmrB. Cleaved mRNA becomes available for tmRNA ligation, leading to ribosomal subunit dissociation and rescue of stalled ribosomes.</text>
</comment>
<comment type="subunit">
    <text evidence="1">Associates with collided ribosomes, but not with correctly translating polysomes.</text>
</comment>
<comment type="similarity">
    <text evidence="1">Belongs to the SmrB family.</text>
</comment>
<reference key="1">
    <citation type="journal article" date="2009" name="PLoS Genet.">
        <title>Organised genome dynamics in the Escherichia coli species results in highly diverse adaptive paths.</title>
        <authorList>
            <person name="Touchon M."/>
            <person name="Hoede C."/>
            <person name="Tenaillon O."/>
            <person name="Barbe V."/>
            <person name="Baeriswyl S."/>
            <person name="Bidet P."/>
            <person name="Bingen E."/>
            <person name="Bonacorsi S."/>
            <person name="Bouchier C."/>
            <person name="Bouvet O."/>
            <person name="Calteau A."/>
            <person name="Chiapello H."/>
            <person name="Clermont O."/>
            <person name="Cruveiller S."/>
            <person name="Danchin A."/>
            <person name="Diard M."/>
            <person name="Dossat C."/>
            <person name="Karoui M.E."/>
            <person name="Frapy E."/>
            <person name="Garry L."/>
            <person name="Ghigo J.M."/>
            <person name="Gilles A.M."/>
            <person name="Johnson J."/>
            <person name="Le Bouguenec C."/>
            <person name="Lescat M."/>
            <person name="Mangenot S."/>
            <person name="Martinez-Jehanne V."/>
            <person name="Matic I."/>
            <person name="Nassif X."/>
            <person name="Oztas S."/>
            <person name="Petit M.A."/>
            <person name="Pichon C."/>
            <person name="Rouy Z."/>
            <person name="Ruf C.S."/>
            <person name="Schneider D."/>
            <person name="Tourret J."/>
            <person name="Vacherie B."/>
            <person name="Vallenet D."/>
            <person name="Medigue C."/>
            <person name="Rocha E.P.C."/>
            <person name="Denamur E."/>
        </authorList>
    </citation>
    <scope>NUCLEOTIDE SEQUENCE [LARGE SCALE GENOMIC DNA]</scope>
    <source>
        <strain>UMN026 / ExPEC</strain>
    </source>
</reference>
<gene>
    <name evidence="1" type="primary">smrB</name>
    <name type="ordered locus">ECUMN_2671</name>
</gene>
<proteinExistence type="inferred from homology"/>
<keyword id="KW-0255">Endonuclease</keyword>
<keyword id="KW-0378">Hydrolase</keyword>
<keyword id="KW-0540">Nuclease</keyword>
<keyword id="KW-0694">RNA-binding</keyword>
<keyword id="KW-0699">rRNA-binding</keyword>
<dbReference type="EC" id="3.1.-.-" evidence="1"/>
<dbReference type="EMBL" id="CU928163">
    <property type="protein sequence ID" value="CAR13852.1"/>
    <property type="molecule type" value="Genomic_DNA"/>
</dbReference>
<dbReference type="RefSeq" id="WP_000730805.1">
    <property type="nucleotide sequence ID" value="NC_011751.1"/>
</dbReference>
<dbReference type="RefSeq" id="YP_002413380.1">
    <property type="nucleotide sequence ID" value="NC_011751.1"/>
</dbReference>
<dbReference type="SMR" id="B7N5U3"/>
<dbReference type="STRING" id="585056.ECUMN_2671"/>
<dbReference type="KEGG" id="eum:ECUMN_2671"/>
<dbReference type="PATRIC" id="fig|585056.7.peg.2854"/>
<dbReference type="HOGENOM" id="CLU_055978_4_0_6"/>
<dbReference type="Proteomes" id="UP000007097">
    <property type="component" value="Chromosome"/>
</dbReference>
<dbReference type="GO" id="GO:0004521">
    <property type="term" value="F:RNA endonuclease activity"/>
    <property type="evidence" value="ECO:0007669"/>
    <property type="project" value="UniProtKB-UniRule"/>
</dbReference>
<dbReference type="GO" id="GO:0019843">
    <property type="term" value="F:rRNA binding"/>
    <property type="evidence" value="ECO:0007669"/>
    <property type="project" value="UniProtKB-UniRule"/>
</dbReference>
<dbReference type="GO" id="GO:0072344">
    <property type="term" value="P:rescue of stalled ribosome"/>
    <property type="evidence" value="ECO:0007669"/>
    <property type="project" value="UniProtKB-UniRule"/>
</dbReference>
<dbReference type="Gene3D" id="3.30.1370.110">
    <property type="match status" value="1"/>
</dbReference>
<dbReference type="HAMAP" id="MF_01042">
    <property type="entry name" value="SmrB"/>
    <property type="match status" value="1"/>
</dbReference>
<dbReference type="InterPro" id="IPR002625">
    <property type="entry name" value="Smr_dom"/>
</dbReference>
<dbReference type="InterPro" id="IPR036063">
    <property type="entry name" value="Smr_dom_sf"/>
</dbReference>
<dbReference type="InterPro" id="IPR022990">
    <property type="entry name" value="SmrB-like"/>
</dbReference>
<dbReference type="NCBIfam" id="NF003432">
    <property type="entry name" value="PRK04946.1"/>
    <property type="match status" value="1"/>
</dbReference>
<dbReference type="PANTHER" id="PTHR35562">
    <property type="entry name" value="DNA ENDONUCLEASE SMRA-RELATED"/>
    <property type="match status" value="1"/>
</dbReference>
<dbReference type="PANTHER" id="PTHR35562:SF1">
    <property type="entry name" value="UPF0115 PROTEIN YFCN"/>
    <property type="match status" value="1"/>
</dbReference>
<dbReference type="Pfam" id="PF01713">
    <property type="entry name" value="Smr"/>
    <property type="match status" value="1"/>
</dbReference>
<dbReference type="SMART" id="SM00463">
    <property type="entry name" value="SMR"/>
    <property type="match status" value="1"/>
</dbReference>
<dbReference type="SUPFAM" id="SSF160443">
    <property type="entry name" value="SMR domain-like"/>
    <property type="match status" value="1"/>
</dbReference>
<dbReference type="PROSITE" id="PS50828">
    <property type="entry name" value="SMR"/>
    <property type="match status" value="1"/>
</dbReference>